<reference key="1">
    <citation type="journal article" date="1988" name="Arch. Biochem. Biophys.">
        <title>The amino acid sequence of bovine thymus prothymosin alpha.</title>
        <authorList>
            <person name="Panneerselvam C."/>
            <person name="Wellner D."/>
            <person name="Horecker B.L."/>
        </authorList>
    </citation>
    <scope>PROTEIN SEQUENCE OF 2-110</scope>
</reference>
<reference key="2">
    <citation type="journal article" date="1979" name="J. Biol. Chem.">
        <title>The chemistry and biology of thymosin. II. Amino acid sequence analysis of thymosin alpha1 and polypeptide beta1.</title>
        <authorList>
            <person name="Low T.L.K."/>
            <person name="Goldstein A.L."/>
        </authorList>
    </citation>
    <scope>PROTEIN SEQUENCE OF 2-29</scope>
    <scope>ACETYLATION AT SER-2</scope>
</reference>
<reference key="3">
    <citation type="journal article" date="1992" name="FEBS Lett.">
        <title>Prothymosin alpha is phosphorylated by casein kinase-2.</title>
        <authorList>
            <person name="Barcia M.G."/>
            <person name="Castro J.M."/>
            <person name="Jullien C.D."/>
            <person name="Gonzalez C.G."/>
            <person name="Freire M."/>
        </authorList>
    </citation>
    <scope>PHOSPHORYLATION AT THR-8; THR-13 AND THR-14 BY CK2</scope>
</reference>
<reference key="4">
    <citation type="journal article" date="1993" name="Biochemistry">
        <title>Phosphorylation of human and bovine prothymosin alpha in vivo.</title>
        <authorList>
            <person name="Sburlati A.R."/>
            <person name="De La Rosa A."/>
            <person name="Batey D.W."/>
            <person name="Kurys G.L."/>
            <person name="Manrow R.E."/>
            <person name="Pannell L.K."/>
            <person name="Martin B.M."/>
            <person name="Sheeley D.M."/>
            <person name="Berger S.L."/>
        </authorList>
    </citation>
    <scope>PHOSPHORYLATION AT SER-2</scope>
    <scope>ACETYLATION AT SER-2</scope>
</reference>
<protein>
    <recommendedName>
        <fullName>Prothymosin alpha</fullName>
    </recommendedName>
    <component>
        <recommendedName>
            <fullName>Prothymosin alpha, N-terminally processed</fullName>
        </recommendedName>
    </component>
    <component>
        <recommendedName>
            <fullName>Thymosin alpha-1</fullName>
        </recommendedName>
    </component>
</protein>
<organism>
    <name type="scientific">Bos taurus</name>
    <name type="common">Bovine</name>
    <dbReference type="NCBI Taxonomy" id="9913"/>
    <lineage>
        <taxon>Eukaryota</taxon>
        <taxon>Metazoa</taxon>
        <taxon>Chordata</taxon>
        <taxon>Craniata</taxon>
        <taxon>Vertebrata</taxon>
        <taxon>Euteleostomi</taxon>
        <taxon>Mammalia</taxon>
        <taxon>Eutheria</taxon>
        <taxon>Laurasiatheria</taxon>
        <taxon>Artiodactyla</taxon>
        <taxon>Ruminantia</taxon>
        <taxon>Pecora</taxon>
        <taxon>Bovidae</taxon>
        <taxon>Bovinae</taxon>
        <taxon>Bos</taxon>
    </lineage>
</organism>
<accession>P01252</accession>
<keyword id="KW-0007">Acetylation</keyword>
<keyword id="KW-0903">Direct protein sequencing</keyword>
<keyword id="KW-1017">Isopeptide bond</keyword>
<keyword id="KW-0539">Nucleus</keyword>
<keyword id="KW-0597">Phosphoprotein</keyword>
<keyword id="KW-1185">Reference proteome</keyword>
<keyword id="KW-0832">Ubl conjugation</keyword>
<comment type="function">
    <text>Prothymosin alpha may mediate immune function by conferring resistance to certain opportunistic infections.</text>
</comment>
<comment type="subunit">
    <text evidence="2">Interacts with NUPR1; regulates apoptotic process.</text>
</comment>
<comment type="subcellular location">
    <subcellularLocation>
        <location>Nucleus</location>
    </subcellularLocation>
</comment>
<comment type="PTM">
    <text evidence="1">Covalently linked to a small RNA of about 20 nucleotides.</text>
</comment>
<comment type="similarity">
    <text evidence="9">Belongs to the pro/parathymosin family.</text>
</comment>
<feature type="chain" id="PRO_0000423254" description="Prothymosin alpha">
    <location>
        <begin position="1"/>
        <end position="110"/>
    </location>
</feature>
<feature type="initiator methionine" description="Removed; alternate" evidence="6 7 8">
    <location>
        <position position="1"/>
    </location>
</feature>
<feature type="chain" id="PRO_0000299249" description="Prothymosin alpha, N-terminally processed">
    <location>
        <begin position="2"/>
        <end position="110"/>
    </location>
</feature>
<feature type="peptide" id="PRO_0000029864" description="Thymosin alpha-1">
    <location>
        <begin position="2"/>
        <end position="29"/>
    </location>
</feature>
<feature type="region of interest" description="Disordered" evidence="4">
    <location>
        <begin position="1"/>
        <end position="110"/>
    </location>
</feature>
<feature type="compositionally biased region" description="Basic and acidic residues" evidence="4">
    <location>
        <begin position="13"/>
        <end position="31"/>
    </location>
</feature>
<feature type="compositionally biased region" description="Low complexity" evidence="4">
    <location>
        <begin position="32"/>
        <end position="41"/>
    </location>
</feature>
<feature type="compositionally biased region" description="Acidic residues" evidence="4">
    <location>
        <begin position="42"/>
        <end position="83"/>
    </location>
</feature>
<feature type="compositionally biased region" description="Basic and acidic residues" evidence="4">
    <location>
        <begin position="100"/>
        <end position="110"/>
    </location>
</feature>
<feature type="modified residue" description="N-acetylmethionine" evidence="2">
    <location>
        <position position="1"/>
    </location>
</feature>
<feature type="modified residue" description="N-acetylserine; in Prothymosin alpha, N-terminally processed" evidence="7 8">
    <location>
        <position position="2"/>
    </location>
</feature>
<feature type="modified residue" description="Phosphoserine" evidence="8">
    <location>
        <position position="2"/>
    </location>
</feature>
<feature type="modified residue" description="Phosphothreonine; by CK2" evidence="5">
    <location>
        <position position="8"/>
    </location>
</feature>
<feature type="modified residue" description="Phosphoserine" evidence="2">
    <location>
        <position position="9"/>
    </location>
</feature>
<feature type="modified residue" description="Phosphoserine" evidence="2">
    <location>
        <position position="10"/>
    </location>
</feature>
<feature type="modified residue" description="Phosphothreonine; by CK2" evidence="5">
    <location>
        <position position="13"/>
    </location>
</feature>
<feature type="modified residue" description="Phosphothreonine; by CK2" evidence="5">
    <location>
        <position position="14"/>
    </location>
</feature>
<feature type="modified residue" description="N6-acetyllysine; alternate" evidence="2">
    <location>
        <position position="15"/>
    </location>
</feature>
<feature type="modified residue" description="N6-succinyllysine; alternate" evidence="3">
    <location>
        <position position="15"/>
    </location>
</feature>
<feature type="modified residue" description="Phosphothreonine" evidence="2">
    <location>
        <position position="101"/>
    </location>
</feature>
<feature type="modified residue" description="N6-acetyllysine; alternate" evidence="3">
    <location>
        <position position="102"/>
    </location>
</feature>
<feature type="modified residue" description="Phosphothreonine" evidence="2">
    <location>
        <position position="106"/>
    </location>
</feature>
<feature type="cross-link" description="Glycyl lysine isopeptide (Lys-Gly) (interchain with G-Cter in SUMO2); alternate" evidence="2">
    <location>
        <position position="102"/>
    </location>
</feature>
<proteinExistence type="evidence at protein level"/>
<dbReference type="PIR" id="A01520">
    <property type="entry name" value="TNBOA1"/>
</dbReference>
<dbReference type="RefSeq" id="XP_003581926.1">
    <property type="nucleotide sequence ID" value="XM_003581878.2"/>
</dbReference>
<dbReference type="RefSeq" id="XP_003585828.1">
    <property type="nucleotide sequence ID" value="XM_003585780.3"/>
</dbReference>
<dbReference type="BMRB" id="P01252"/>
<dbReference type="SMR" id="P01252"/>
<dbReference type="FunCoup" id="P01252">
    <property type="interactions" value="376"/>
</dbReference>
<dbReference type="STRING" id="9913.ENSBTAP00000003305"/>
<dbReference type="iPTMnet" id="P01252"/>
<dbReference type="PaxDb" id="9913-ENSBTAP00000003305"/>
<dbReference type="PeptideAtlas" id="P01252"/>
<dbReference type="GeneID" id="786336"/>
<dbReference type="KEGG" id="bta:786336"/>
<dbReference type="CTD" id="5757"/>
<dbReference type="VEuPathDB" id="HostDB:ENSBTAG00000002549"/>
<dbReference type="eggNOG" id="ENOG502S55T">
    <property type="taxonomic scope" value="Eukaryota"/>
</dbReference>
<dbReference type="HOGENOM" id="CLU_136539_0_1_1"/>
<dbReference type="InParanoid" id="P01252"/>
<dbReference type="OMA" id="HCSCARL"/>
<dbReference type="TreeFam" id="TF350357"/>
<dbReference type="Proteomes" id="UP000009136">
    <property type="component" value="Chromosome 2"/>
</dbReference>
<dbReference type="Bgee" id="ENSBTAG00000002549">
    <property type="expression patterns" value="Expressed in thymus and 104 other cell types or tissues"/>
</dbReference>
<dbReference type="GO" id="GO:0005634">
    <property type="term" value="C:nucleus"/>
    <property type="evidence" value="ECO:0000318"/>
    <property type="project" value="GO_Central"/>
</dbReference>
<dbReference type="GO" id="GO:0140297">
    <property type="term" value="F:DNA-binding transcription factor binding"/>
    <property type="evidence" value="ECO:0000314"/>
    <property type="project" value="CAFA"/>
</dbReference>
<dbReference type="GO" id="GO:0042393">
    <property type="term" value="F:histone binding"/>
    <property type="evidence" value="ECO:0000318"/>
    <property type="project" value="GO_Central"/>
</dbReference>
<dbReference type="GO" id="GO:0043066">
    <property type="term" value="P:negative regulation of apoptotic process"/>
    <property type="evidence" value="ECO:0000250"/>
    <property type="project" value="UniProtKB"/>
</dbReference>
<dbReference type="GO" id="GO:0045944">
    <property type="term" value="P:positive regulation of transcription by RNA polymerase II"/>
    <property type="evidence" value="ECO:0000318"/>
    <property type="project" value="GO_Central"/>
</dbReference>
<dbReference type="DisProt" id="DP00814"/>
<dbReference type="InterPro" id="IPR004931">
    <property type="entry name" value="Pro/parathymosin"/>
</dbReference>
<dbReference type="PANTHER" id="PTHR22745">
    <property type="entry name" value="PROTHYMOSIN ALPHA"/>
    <property type="match status" value="1"/>
</dbReference>
<dbReference type="PANTHER" id="PTHR22745:SF0">
    <property type="entry name" value="PROTHYMOSIN ALPHA"/>
    <property type="match status" value="1"/>
</dbReference>
<dbReference type="Pfam" id="PF03247">
    <property type="entry name" value="Prothymosin"/>
    <property type="match status" value="1"/>
</dbReference>
<gene>
    <name type="primary">PTMA</name>
</gene>
<evidence type="ECO:0000250" key="1"/>
<evidence type="ECO:0000250" key="2">
    <source>
        <dbReference type="UniProtKB" id="P06454"/>
    </source>
</evidence>
<evidence type="ECO:0000250" key="3">
    <source>
        <dbReference type="UniProtKB" id="P26350"/>
    </source>
</evidence>
<evidence type="ECO:0000256" key="4">
    <source>
        <dbReference type="SAM" id="MobiDB-lite"/>
    </source>
</evidence>
<evidence type="ECO:0000269" key="5">
    <source>
    </source>
</evidence>
<evidence type="ECO:0000269" key="6">
    <source>
    </source>
</evidence>
<evidence type="ECO:0000269" key="7">
    <source>
    </source>
</evidence>
<evidence type="ECO:0000269" key="8">
    <source>
    </source>
</evidence>
<evidence type="ECO:0000305" key="9"/>
<sequence length="110" mass="12072">MSDAAVDTSSEITTKDLKEKKEVVEEAENGREAPANGNANEENGEQEADNEVDEEEEEGGEEEEEEEEGDGEEEDGDEDEEAEAATGKRAAEDDEDDDVDTKKQKTDEDD</sequence>
<name>PTMA_BOVIN</name>